<gene>
    <name evidence="1" type="primary">proS</name>
    <name type="ordered locus">CENSYa_0369</name>
</gene>
<protein>
    <recommendedName>
        <fullName evidence="1">Proline--tRNA ligase</fullName>
        <ecNumber evidence="1">6.1.1.15</ecNumber>
    </recommendedName>
    <alternativeName>
        <fullName evidence="1">Prolyl-tRNA synthetase</fullName>
        <shortName evidence="1">ProRS</shortName>
    </alternativeName>
</protein>
<feature type="chain" id="PRO_0000288417" description="Proline--tRNA ligase">
    <location>
        <begin position="1"/>
        <end position="476"/>
    </location>
</feature>
<sequence>MKVGITASKSDDFSEWYTQVVLKAELADYAPVKGLIVLRPDGYSIWESIRTSLDVKLAARGVRNGFLPVLIPESLLGKEKEHFAGFNPEVFWVTHSGENKVGDRLALRPTSETLAYSLYSKWIKSWRDLPLRINFWNTALRAEIKSTKPFLRTSEFLWQEGHTVHACSEEAESEVAAILELYRETVEGDLAIPVITGRKSEKEKFVGAVYTTTMESMMPDGRALQMGTSHFLGQNFSRPFEVKFADKDNVEHFAWQTSWGLSWRLIGAMIMVHGDDKGLVLPPKVAPLQVVIIPISYSGEEGAQVLAAAEGMEAELLKAGIRARTDKREELTPGFKFHDWEMRGVPVRIEIGPRDLKDGSAVLATRHDGKKSKVPLDGAAVNIEEELCRVQTEMLGAAKRALDGMIHDASSYGALTKAVEGGGFVRAAWCGGLECEEKVKEETGADIRVVPEGGAEGACIVCGGRAASIPLFARGY</sequence>
<name>SYP_CENSY</name>
<keyword id="KW-0030">Aminoacyl-tRNA synthetase</keyword>
<keyword id="KW-0067">ATP-binding</keyword>
<keyword id="KW-0963">Cytoplasm</keyword>
<keyword id="KW-0436">Ligase</keyword>
<keyword id="KW-0547">Nucleotide-binding</keyword>
<keyword id="KW-0648">Protein biosynthesis</keyword>
<keyword id="KW-1185">Reference proteome</keyword>
<organism>
    <name type="scientific">Cenarchaeum symbiosum (strain A)</name>
    <dbReference type="NCBI Taxonomy" id="414004"/>
    <lineage>
        <taxon>Archaea</taxon>
        <taxon>Nitrososphaerota</taxon>
        <taxon>Candidatus Cenarchaeales</taxon>
        <taxon>Candidatus Cenarchaeaceae</taxon>
        <taxon>Candidatus Cenarchaeum</taxon>
    </lineage>
</organism>
<accession>A0RUI8</accession>
<reference key="1">
    <citation type="journal article" date="2006" name="Proc. Natl. Acad. Sci. U.S.A.">
        <title>Genomic analysis of the uncultivated marine crenarchaeote Cenarchaeum symbiosum.</title>
        <authorList>
            <person name="Hallam S.J."/>
            <person name="Konstantinidis K.T."/>
            <person name="Putnam N."/>
            <person name="Schleper C."/>
            <person name="Watanabe Y."/>
            <person name="Sugahara J."/>
            <person name="Preston C."/>
            <person name="de la Torre J."/>
            <person name="Richardson P.M."/>
            <person name="DeLong E.F."/>
        </authorList>
    </citation>
    <scope>NUCLEOTIDE SEQUENCE [LARGE SCALE GENOMIC DNA]</scope>
    <source>
        <strain>A</strain>
    </source>
</reference>
<comment type="function">
    <text evidence="1">Catalyzes the attachment of proline to tRNA(Pro) in a two-step reaction: proline is first activated by ATP to form Pro-AMP and then transferred to the acceptor end of tRNA(Pro).</text>
</comment>
<comment type="catalytic activity">
    <reaction evidence="1">
        <text>tRNA(Pro) + L-proline + ATP = L-prolyl-tRNA(Pro) + AMP + diphosphate</text>
        <dbReference type="Rhea" id="RHEA:14305"/>
        <dbReference type="Rhea" id="RHEA-COMP:9700"/>
        <dbReference type="Rhea" id="RHEA-COMP:9702"/>
        <dbReference type="ChEBI" id="CHEBI:30616"/>
        <dbReference type="ChEBI" id="CHEBI:33019"/>
        <dbReference type="ChEBI" id="CHEBI:60039"/>
        <dbReference type="ChEBI" id="CHEBI:78442"/>
        <dbReference type="ChEBI" id="CHEBI:78532"/>
        <dbReference type="ChEBI" id="CHEBI:456215"/>
        <dbReference type="EC" id="6.1.1.15"/>
    </reaction>
</comment>
<comment type="subunit">
    <text evidence="1">Homodimer.</text>
</comment>
<comment type="subcellular location">
    <subcellularLocation>
        <location evidence="1">Cytoplasm</location>
    </subcellularLocation>
</comment>
<comment type="domain">
    <text evidence="1">Consists of three domains: the N-terminal catalytic domain, the anticodon-binding domain and the C-terminal extension.</text>
</comment>
<comment type="similarity">
    <text evidence="1">Belongs to the class-II aminoacyl-tRNA synthetase family. ProS type 3 subfamily.</text>
</comment>
<proteinExistence type="inferred from homology"/>
<dbReference type="EC" id="6.1.1.15" evidence="1"/>
<dbReference type="EMBL" id="DP000238">
    <property type="protein sequence ID" value="ABK77005.1"/>
    <property type="molecule type" value="Genomic_DNA"/>
</dbReference>
<dbReference type="SMR" id="A0RUI8"/>
<dbReference type="STRING" id="414004.CENSYa_0369"/>
<dbReference type="EnsemblBacteria" id="ABK77005">
    <property type="protein sequence ID" value="ABK77005"/>
    <property type="gene ID" value="CENSYa_0369"/>
</dbReference>
<dbReference type="KEGG" id="csy:CENSYa_0369"/>
<dbReference type="PATRIC" id="fig|414004.10.peg.330"/>
<dbReference type="HOGENOM" id="CLU_001882_4_2_2"/>
<dbReference type="Proteomes" id="UP000000758">
    <property type="component" value="Chromosome"/>
</dbReference>
<dbReference type="GO" id="GO:0017101">
    <property type="term" value="C:aminoacyl-tRNA synthetase multienzyme complex"/>
    <property type="evidence" value="ECO:0007669"/>
    <property type="project" value="TreeGrafter"/>
</dbReference>
<dbReference type="GO" id="GO:0005737">
    <property type="term" value="C:cytoplasm"/>
    <property type="evidence" value="ECO:0007669"/>
    <property type="project" value="UniProtKB-SubCell"/>
</dbReference>
<dbReference type="GO" id="GO:0005524">
    <property type="term" value="F:ATP binding"/>
    <property type="evidence" value="ECO:0007669"/>
    <property type="project" value="UniProtKB-UniRule"/>
</dbReference>
<dbReference type="GO" id="GO:0004827">
    <property type="term" value="F:proline-tRNA ligase activity"/>
    <property type="evidence" value="ECO:0007669"/>
    <property type="project" value="UniProtKB-UniRule"/>
</dbReference>
<dbReference type="GO" id="GO:0006433">
    <property type="term" value="P:prolyl-tRNA aminoacylation"/>
    <property type="evidence" value="ECO:0007669"/>
    <property type="project" value="UniProtKB-UniRule"/>
</dbReference>
<dbReference type="CDD" id="cd00862">
    <property type="entry name" value="ProRS_anticodon_zinc"/>
    <property type="match status" value="1"/>
</dbReference>
<dbReference type="CDD" id="cd00778">
    <property type="entry name" value="ProRS_core_arch_euk"/>
    <property type="match status" value="1"/>
</dbReference>
<dbReference type="FunFam" id="3.40.50.800:FF:000005">
    <property type="entry name" value="bifunctional glutamate/proline--tRNA ligase"/>
    <property type="match status" value="1"/>
</dbReference>
<dbReference type="FunFam" id="3.30.930.10:FF:000037">
    <property type="entry name" value="Proline--tRNA ligase"/>
    <property type="match status" value="1"/>
</dbReference>
<dbReference type="Gene3D" id="3.40.50.800">
    <property type="entry name" value="Anticodon-binding domain"/>
    <property type="match status" value="1"/>
</dbReference>
<dbReference type="Gene3D" id="3.30.930.10">
    <property type="entry name" value="Bira Bifunctional Protein, Domain 2"/>
    <property type="match status" value="1"/>
</dbReference>
<dbReference type="Gene3D" id="3.30.110.30">
    <property type="entry name" value="C-terminal domain of ProRS"/>
    <property type="match status" value="1"/>
</dbReference>
<dbReference type="HAMAP" id="MF_01571">
    <property type="entry name" value="Pro_tRNA_synth_type3"/>
    <property type="match status" value="1"/>
</dbReference>
<dbReference type="InterPro" id="IPR002314">
    <property type="entry name" value="aa-tRNA-synt_IIb"/>
</dbReference>
<dbReference type="InterPro" id="IPR006195">
    <property type="entry name" value="aa-tRNA-synth_II"/>
</dbReference>
<dbReference type="InterPro" id="IPR045864">
    <property type="entry name" value="aa-tRNA-synth_II/BPL/LPL"/>
</dbReference>
<dbReference type="InterPro" id="IPR004154">
    <property type="entry name" value="Anticodon-bd"/>
</dbReference>
<dbReference type="InterPro" id="IPR036621">
    <property type="entry name" value="Anticodon-bd_dom_sf"/>
</dbReference>
<dbReference type="InterPro" id="IPR002316">
    <property type="entry name" value="Pro-tRNA-ligase_IIa"/>
</dbReference>
<dbReference type="InterPro" id="IPR004499">
    <property type="entry name" value="Pro-tRNA-ligase_IIa_arc-type"/>
</dbReference>
<dbReference type="InterPro" id="IPR016061">
    <property type="entry name" value="Pro-tRNA_ligase_II_C"/>
</dbReference>
<dbReference type="InterPro" id="IPR017449">
    <property type="entry name" value="Pro-tRNA_synth_II"/>
</dbReference>
<dbReference type="InterPro" id="IPR033721">
    <property type="entry name" value="ProRS_core_arch_euk"/>
</dbReference>
<dbReference type="NCBIfam" id="TIGR00408">
    <property type="entry name" value="proS_fam_I"/>
    <property type="match status" value="1"/>
</dbReference>
<dbReference type="PANTHER" id="PTHR43382:SF2">
    <property type="entry name" value="BIFUNCTIONAL GLUTAMATE_PROLINE--TRNA LIGASE"/>
    <property type="match status" value="1"/>
</dbReference>
<dbReference type="PANTHER" id="PTHR43382">
    <property type="entry name" value="PROLYL-TRNA SYNTHETASE"/>
    <property type="match status" value="1"/>
</dbReference>
<dbReference type="Pfam" id="PF03129">
    <property type="entry name" value="HGTP_anticodon"/>
    <property type="match status" value="1"/>
</dbReference>
<dbReference type="Pfam" id="PF09180">
    <property type="entry name" value="ProRS-C_1"/>
    <property type="match status" value="1"/>
</dbReference>
<dbReference type="Pfam" id="PF00587">
    <property type="entry name" value="tRNA-synt_2b"/>
    <property type="match status" value="1"/>
</dbReference>
<dbReference type="PRINTS" id="PR01046">
    <property type="entry name" value="TRNASYNTHPRO"/>
</dbReference>
<dbReference type="SMART" id="SM00946">
    <property type="entry name" value="ProRS-C_1"/>
    <property type="match status" value="1"/>
</dbReference>
<dbReference type="SUPFAM" id="SSF64586">
    <property type="entry name" value="C-terminal domain of ProRS"/>
    <property type="match status" value="1"/>
</dbReference>
<dbReference type="SUPFAM" id="SSF52954">
    <property type="entry name" value="Class II aaRS ABD-related"/>
    <property type="match status" value="1"/>
</dbReference>
<dbReference type="SUPFAM" id="SSF55681">
    <property type="entry name" value="Class II aaRS and biotin synthetases"/>
    <property type="match status" value="1"/>
</dbReference>
<dbReference type="PROSITE" id="PS50862">
    <property type="entry name" value="AA_TRNA_LIGASE_II"/>
    <property type="match status" value="1"/>
</dbReference>
<evidence type="ECO:0000255" key="1">
    <source>
        <dbReference type="HAMAP-Rule" id="MF_01571"/>
    </source>
</evidence>